<sequence length="1640" mass="182105">AALQVLSAPNLLRVGSNENIFVESQDHVGGPLNVKIMVKNHPTQSKELASKSVVLDQANNFQAMTQLVIQRGPLVDDPKQKQYVVLQAQFPDRLLEKVVLVSFQSGYIFIQTDKTIYTPASTVHYRVFSMTPGLEPLTREIFEDQEVAKNKEIAVSVEIMTPENITIFREIVNPDKGVKSGQFKLPDIVSFGTWHVVTRFQSTPQKTFSSEFEVKEYVLPSFEVSLTPAKAFFYVDDNDLTVDITARYLYGKEVTGTGYVVFGVITTESEKKSFPASLQRVEIKDGKGVACLKKEHITQTFPKIHDLVKQSIFVSVSVLTEGGGEMVEAEKRGIQIVTSPYSILFKRTPKYFKPGMPFDVSVYITNPDNSPAIGVEVEVTPDHAKGVTRANGFAKIPLNTVASATELVITVKTKDPGDPRQQTGGGTMKALPYRTSTKNFLHVGVDSNELKIGDPIKIDLNLGPTTIPNHDLTYMFLSRGQLVKVGRFKRQGNALVTLSVPVSKELLPSFRIVAYYHVGAADLVADSVWVDIKVSCMGSLKVTSTRPKASYEPRRAFSLTITGDPGAKVGLVAVDKGVYVLNSKHRLTQTKIWDTIEKHDTGCTAGGGADNMGVFYDAGLVFETNTAKGTGIRTDPSCPVSSRRRRAVTISDVITSMASKYHGLAKECCVDGMRDNTMGYTCDRRAQYISDGDVCVQAFLVCCTEMASKKIESKQDALLLSRSEEDDDDDAYMRSEDIVSRSQFPESWMWEDTNLPECPAQNKHCESTSVIRNNFLKDSITTWQITAISLSKTHGICVADPFEMIVLKEFFIDLKLPYSAVRNEQLEVKAILHNYSEDPIIVRVELMENGEVCSSASKKGKYRQEVNMDPMSTRVVPYVIIPMKLGLHSIEVKASVKNSGSNDGVKRDLRVVAEGVLVKKETNVLLNPVKHGGEQTSHIPSGVPRNQVPNSDADTLISVTAGEQTSVLVEQAISGDSLGSLIVQPVGCGEQNMIYMTLPVIATHYLDNTKKWEDIGLDKRNTAIKYINIGYQRQLAYRKEDGSYAAWVSRQSSTWLTAYVVKVFAMSSTLISVQENVLCTAVKWLILNTQQPDGIFNEFAPVIHAEMTGNVRGSDNDASMTAFVLIAMQEASSVCEQSVNSLPGSMAKAVAYLEKRLPHLTNPYAVAMTSYALANAGKLNKETLLKFASPQLDHWPVPGGYQYTLEATSYALLALVKVKAFEEAGPIVRWLNKQKKVGGGYGSTQSTIMVFQAVAEYWSHVKDLKDFDLNINLEVAGRASVTKWSINNKNQFHTRTDKVNSIDKDLTVKASGNGEATLSVVTLYYALPEEKDSDCESFDLSVTLTKMDKTSHEDAKESFMLTIEVLYKNSERDATMSILDIGLLTGFIVDTDDLNQLSKGRERYIEKFEMDKVLSERGSLILYLDKVSHKLEDRISFKIHRVQEVGVLQPAAVSVYEYYNQKRCVKFYHPQREGGTLSRLCLGDVCTCAEESCSMQKKGEPDVQRIDKACGAGLDYVYKATVVDSKLTTHTDTYTVKIDLVIKPGTDEGVEGKNRDFMGLAYCREALGLMQGKTYMIMGKSEDLHRVEDKGLLQYKYVLGEQTWIEYWPSQQECTSRDYREVCLGIDEFINQITTFGCPV</sequence>
<feature type="chain" id="PRO_0000005952" description="Complement C3">
    <location>
        <begin position="1"/>
        <end position="1640"/>
    </location>
</feature>
<feature type="chain" id="PRO_0000005953" description="Complement C3 beta chain">
    <location>
        <begin position="1"/>
        <end position="642"/>
    </location>
</feature>
<feature type="chain" id="PRO_0000005954" description="Complement C3 alpha chain">
    <location>
        <begin position="647"/>
        <end position="1640"/>
    </location>
</feature>
<feature type="chain" id="PRO_0000005955" description="C3a anaphylatoxin">
    <location>
        <begin position="647"/>
        <end position="722"/>
    </location>
</feature>
<feature type="chain" id="PRO_0000005956" description="Complement C3b">
    <location>
        <begin position="723"/>
        <end position="1640"/>
    </location>
</feature>
<feature type="domain" description="Anaphylatoxin-like" evidence="2">
    <location>
        <begin position="668"/>
        <end position="703"/>
    </location>
</feature>
<feature type="domain" description="NTR" evidence="3">
    <location>
        <begin position="1493"/>
        <end position="1638"/>
    </location>
</feature>
<feature type="region of interest" description="Properdin-binding">
    <location>
        <begin position="1420"/>
        <end position="1430"/>
    </location>
</feature>
<feature type="site" description="Cleavage; by C3 convertase" evidence="1">
    <location>
        <begin position="722"/>
        <end position="723"/>
    </location>
</feature>
<feature type="site" description="Cleavage; by factor I" evidence="1">
    <location>
        <begin position="931"/>
        <end position="932"/>
    </location>
</feature>
<feature type="site" description="Cleavage; by factor I" evidence="1">
    <location>
        <begin position="1278"/>
        <end position="1279"/>
    </location>
</feature>
<feature type="site" description="Cleavage; by factor I">
    <location>
        <begin position="1295"/>
        <end position="1296"/>
    </location>
</feature>
<feature type="glycosylation site" description="N-linked (GlcNAc...) asparagine" evidence="4">
    <location>
        <position position="164"/>
    </location>
</feature>
<feature type="disulfide bond" description="Interchain (between beta and alpha chains)" evidence="2 3">
    <location>
        <begin position="536"/>
        <end position="797"/>
    </location>
</feature>
<feature type="disulfide bond" evidence="1">
    <location>
        <begin position="603"/>
        <end position="638"/>
    </location>
</feature>
<feature type="disulfide bond" evidence="1">
    <location>
        <begin position="668"/>
        <end position="695"/>
    </location>
</feature>
<feature type="disulfide bond" evidence="1">
    <location>
        <begin position="669"/>
        <end position="702"/>
    </location>
</feature>
<feature type="disulfide bond" evidence="1">
    <location>
        <begin position="682"/>
        <end position="703"/>
    </location>
</feature>
<feature type="disulfide bond" evidence="1">
    <location>
        <begin position="853"/>
        <end position="1488"/>
    </location>
</feature>
<feature type="disulfide bond" evidence="1">
    <location>
        <begin position="1079"/>
        <end position="1135"/>
    </location>
</feature>
<feature type="disulfide bond" evidence="1">
    <location>
        <begin position="1335"/>
        <end position="1464"/>
    </location>
</feature>
<feature type="disulfide bond" evidence="1">
    <location>
        <begin position="1481"/>
        <end position="1486"/>
    </location>
</feature>
<feature type="disulfide bond" evidence="1">
    <location>
        <begin position="1493"/>
        <end position="1563"/>
    </location>
</feature>
<feature type="disulfide bond" evidence="1">
    <location>
        <begin position="1510"/>
        <end position="1638"/>
    </location>
</feature>
<feature type="disulfide bond" evidence="1">
    <location>
        <begin position="1614"/>
        <end position="1623"/>
    </location>
</feature>
<feature type="cross-link" description="Isoglutamyl cysteine thioester (Cys-Gln)" evidence="1">
    <location>
        <begin position="988"/>
        <end position="991"/>
    </location>
</feature>
<feature type="non-terminal residue">
    <location>
        <position position="1"/>
    </location>
</feature>
<comment type="function">
    <text evidence="1">Precursor of non-enzymatic components of the classical, alternative, lectin and GZMK complement pathways, which consist in a cascade of proteins that leads to phagocytosis and breakdown of pathogens and signaling that strengthens the adaptive immune system.</text>
</comment>
<comment type="function">
    <molecule>Complement C3b</molecule>
    <text evidence="1">Non-enzymatic component of C5 convertase. Generated following cleavage by C3 convertase, it covalently attaches to the surface of pathogens, where it acts as an opsonin that marks the surface of antigens for removal. Complement C3b binds covalently via its reactive thioester, to cell surface carbohydrates or immune aggregates. Together with complement C4b, it then recruits the serine protease complement C2b to form the C5 convertase, which cleaves and activate C5, the next component of the complement pathways. In the alternative complement pathway, recruits the serine protease CFB to form the C5 convertase that cleaves and activates C5.</text>
</comment>
<comment type="function">
    <molecule>C3a anaphylatoxin</molecule>
    <text evidence="1">Mediator of local inflammatory process released following cleavage by C3 convertase. Acts by binding to its receptor, C3AR1, activating G protein-coupled receptor signaling, promoting the phosphorylation, ARRB2-mediated internalization and endocytosis of C3AR1. C3a anaphylatoxin stimulates the activation of immune cells such as mast cells and basophilic leukocytes to release inflammation agents, such as cytokines, chemokines and histamine, which promote inflammation development. Also acts as potent chemoattractant for the migration of macrophages and neutrophils to the inflamed tissues, resulting in neutralization of the inflammatory triggers by multiple ways, such as phagocytosis and generation of reactive oxidants.</text>
</comment>
<comment type="subunit">
    <text evidence="1">In absence of complement activation, the C3 precursor is first processed by the removal of 4 Arg residues, forming two chains, beta and alpha, linked by a disulfide bond.</text>
</comment>
<comment type="subunit">
    <molecule>Complement C3b</molecule>
    <text evidence="1">Complement C3b is composed of complement C3b and complement C3 beta chains that are associated via disulfide bonds. Non-enzymatic component of the C5 convertase, also named C4bC2bC3b, composed of the serine protease complement C2b (C2), complement C3b, as well as complement C4b (C4). Non-enzymatic component of the C5 convertase of the alternative complement pathways composed of the serine protease complement CFB and complement C3b. Interacts with CFP; interaction takes place together with CFB in the alternative complement system and allows the complex to become active. Interacts with CR1 (via Sushi 8 and Sushi 9 domains). Interacts with CFH.</text>
</comment>
<comment type="subcellular location">
    <subcellularLocation>
        <location evidence="1">Secreted</location>
    </subcellularLocation>
</comment>
<comment type="subcellular location">
    <molecule>Complement C3b</molecule>
    <subcellularLocation>
        <location evidence="1">Secreted</location>
    </subcellularLocation>
    <subcellularLocation>
        <location evidence="1">Cell surface</location>
    </subcellularLocation>
    <text evidence="1">Covalently associated with the surface of pathogens: the internal thioester bond reacts with carbohydrate antigens on the target surface to form amide or ester bonds.</text>
</comment>
<comment type="subcellular location">
    <molecule>C3a anaphylatoxin</molecule>
    <subcellularLocation>
        <location evidence="1">Secreted</location>
    </subcellularLocation>
</comment>
<comment type="PTM">
    <text evidence="1">C3 precursor is first processed by the removal of 4 Arg residues, forming two chains, beta and alpha, linked by a disulfide bond. During activation of the complement systems, the alpha chain is cleaved into C3a and C3b by the C3 convertase: C3b stays linked to the beta chain, while C3a is released in the plasma. The alpha chain is cleaved by the serine protease complement C2b component of the C3 convertase to generate C3a and C3b following activation by the classical, lectin and GZMK complement systems. The alpha chain is cleaved by CFB component of the C3 convertase to generate C3a and C3b following activation by the alternative complement system.</text>
</comment>
<comment type="PTM">
    <molecule>C3a anaphylatoxin</molecule>
    <text evidence="1">C3a is further processed by carboxypeptidases to release the C-terminal arginine residue generating the acylation stimulating protein (ASP). Levels of ASP are increased in adipocytes in the postprandial period and by insulin and dietary chylomicrons.</text>
</comment>
<comment type="PTM">
    <molecule>Complement C3b</molecule>
    <text evidence="1">Complement C3b is rapidly split in two positions by factor I (CFI) and a cofactor (CFH) to form iC3b (inactivated C3b) and C3f which is released. CFI and CFH catalyze proteolytic degradation of already-deposited complement C3b. Then iC3b is slowly cleaved (possibly by CFI) to form C3c (beta chain + alpha' chain fragment 1 + alpha' chain fragment 2), C3dg and C3f. Other proteases produce other fragments such as C3d or C3g.</text>
</comment>
<comment type="PTM">
    <molecule>Complement C3b</molecule>
    <text evidence="1">Upon activation, the internal thioester bond reacts with carbohydrate antigens on the target surface to form amide or ester bonds, leading to covalent association with the surface of pathogens.</text>
</comment>
<comment type="PTM">
    <molecule>Complement C3b</molecule>
    <text evidence="1">Complement C3b interacts with complement C4b via a thioester linkage.</text>
</comment>
<comment type="PTM">
    <text evidence="1">Phosphorylated by FAM20C in the extracellular medium.</text>
</comment>
<comment type="sequence caution" evidence="5">
    <conflict type="erroneous initiation">
        <sequence resource="EMBL-CDS" id="AAB05029"/>
    </conflict>
</comment>
<protein>
    <recommendedName>
        <fullName>Complement C3</fullName>
    </recommendedName>
    <component>
        <recommendedName>
            <fullName>Complement C3 beta chain</fullName>
        </recommendedName>
    </component>
    <component>
        <recommendedName>
            <fullName>Complement C3 alpha chain</fullName>
        </recommendedName>
    </component>
    <component>
        <recommendedName>
            <fullName>C3a anaphylatoxin</fullName>
        </recommendedName>
    </component>
    <component>
        <recommendedName>
            <fullName>Complement C3b</fullName>
        </recommendedName>
        <alternativeName>
            <fullName>Complement C3b-alpha' chain</fullName>
        </alternativeName>
    </component>
</protein>
<accession>P98093</accession>
<reference key="1">
    <citation type="journal article" date="1993" name="J. Immunol.">
        <title>Third component of trout complement. cDNA cloning and conservation of functional sites.</title>
        <authorList>
            <person name="Lambris J.D."/>
            <person name="Lao Z."/>
            <person name="Pang J."/>
            <person name="Alsenz J."/>
        </authorList>
    </citation>
    <scope>NUCLEOTIDE SEQUENCE [MRNA]</scope>
    <scope>PROTEIN SEQUENCE OF 1-23; 647-666; 723-733; 946-960; 1034-1046; 1296-1312 AND 1310-1329</scope>
    <scope>GLYCOSYLATION AT ASN-164</scope>
    <source>
        <tissue>Liver</tissue>
    </source>
</reference>
<organism>
    <name type="scientific">Oncorhynchus mykiss</name>
    <name type="common">Rainbow trout</name>
    <name type="synonym">Salmo gairdneri</name>
    <dbReference type="NCBI Taxonomy" id="8022"/>
    <lineage>
        <taxon>Eukaryota</taxon>
        <taxon>Metazoa</taxon>
        <taxon>Chordata</taxon>
        <taxon>Craniata</taxon>
        <taxon>Vertebrata</taxon>
        <taxon>Euteleostomi</taxon>
        <taxon>Actinopterygii</taxon>
        <taxon>Neopterygii</taxon>
        <taxon>Teleostei</taxon>
        <taxon>Protacanthopterygii</taxon>
        <taxon>Salmoniformes</taxon>
        <taxon>Salmonidae</taxon>
        <taxon>Salmoninae</taxon>
        <taxon>Oncorhynchus</taxon>
    </lineage>
</organism>
<keyword id="KW-0165">Cleavage on pair of basic residues</keyword>
<keyword id="KW-0179">Complement alternate pathway</keyword>
<keyword id="KW-0180">Complement pathway</keyword>
<keyword id="KW-0903">Direct protein sequencing</keyword>
<keyword id="KW-1015">Disulfide bond</keyword>
<keyword id="KW-0325">Glycoprotein</keyword>
<keyword id="KW-0391">Immunity</keyword>
<keyword id="KW-0395">Inflammatory response</keyword>
<keyword id="KW-0399">Innate immunity</keyword>
<keyword id="KW-0964">Secreted</keyword>
<keyword id="KW-0882">Thioester bond</keyword>
<gene>
    <name type="primary">c3</name>
</gene>
<dbReference type="EMBL" id="L24433">
    <property type="protein sequence ID" value="AAB05029.1"/>
    <property type="status" value="ALT_INIT"/>
    <property type="molecule type" value="mRNA"/>
</dbReference>
<dbReference type="PIR" id="I51339">
    <property type="entry name" value="I51339"/>
</dbReference>
<dbReference type="SMR" id="P98093"/>
<dbReference type="MEROPS" id="I39.950"/>
<dbReference type="GlyCosmos" id="P98093">
    <property type="glycosylation" value="1 site, No reported glycans"/>
</dbReference>
<dbReference type="Proteomes" id="UP000694395">
    <property type="component" value="Unplaced"/>
</dbReference>
<dbReference type="GO" id="GO:0005615">
    <property type="term" value="C:extracellular space"/>
    <property type="evidence" value="ECO:0007669"/>
    <property type="project" value="InterPro"/>
</dbReference>
<dbReference type="GO" id="GO:0001872">
    <property type="term" value="F:(1-&gt;3)-beta-D-glucan binding"/>
    <property type="evidence" value="ECO:0000314"/>
    <property type="project" value="AgBase"/>
</dbReference>
<dbReference type="GO" id="GO:0003823">
    <property type="term" value="F:antigen binding"/>
    <property type="evidence" value="ECO:0000314"/>
    <property type="project" value="AgBase"/>
</dbReference>
<dbReference type="GO" id="GO:0001848">
    <property type="term" value="F:complement binding"/>
    <property type="evidence" value="ECO:0000314"/>
    <property type="project" value="AgBase"/>
</dbReference>
<dbReference type="GO" id="GO:0004866">
    <property type="term" value="F:endopeptidase inhibitor activity"/>
    <property type="evidence" value="ECO:0007669"/>
    <property type="project" value="InterPro"/>
</dbReference>
<dbReference type="GO" id="GO:0006957">
    <property type="term" value="P:complement activation, alternative pathway"/>
    <property type="evidence" value="ECO:0007669"/>
    <property type="project" value="UniProtKB-KW"/>
</dbReference>
<dbReference type="GO" id="GO:0006958">
    <property type="term" value="P:complement activation, classical pathway"/>
    <property type="evidence" value="ECO:0007669"/>
    <property type="project" value="UniProtKB-KW"/>
</dbReference>
<dbReference type="GO" id="GO:0042742">
    <property type="term" value="P:defense response to bacterium"/>
    <property type="evidence" value="ECO:0000314"/>
    <property type="project" value="AgBase"/>
</dbReference>
<dbReference type="GO" id="GO:0006954">
    <property type="term" value="P:inflammatory response"/>
    <property type="evidence" value="ECO:0007669"/>
    <property type="project" value="UniProtKB-KW"/>
</dbReference>
<dbReference type="CDD" id="cd00017">
    <property type="entry name" value="ANATO"/>
    <property type="match status" value="1"/>
</dbReference>
<dbReference type="CDD" id="cd02896">
    <property type="entry name" value="complement_C3_C4_C5"/>
    <property type="match status" value="1"/>
</dbReference>
<dbReference type="CDD" id="cd03583">
    <property type="entry name" value="NTR_complement_C3"/>
    <property type="match status" value="1"/>
</dbReference>
<dbReference type="FunFam" id="1.20.91.20:FF:000001">
    <property type="entry name" value="Complement C3"/>
    <property type="match status" value="1"/>
</dbReference>
<dbReference type="FunFam" id="1.50.10.20:FF:000008">
    <property type="entry name" value="Complement C3"/>
    <property type="match status" value="1"/>
</dbReference>
<dbReference type="FunFam" id="2.20.130.20:FF:000001">
    <property type="entry name" value="Complement C3"/>
    <property type="match status" value="1"/>
</dbReference>
<dbReference type="FunFam" id="2.40.50.120:FF:000013">
    <property type="entry name" value="Complement C3"/>
    <property type="match status" value="1"/>
</dbReference>
<dbReference type="FunFam" id="2.60.40.1930:FF:000006">
    <property type="entry name" value="Complement C3"/>
    <property type="match status" value="1"/>
</dbReference>
<dbReference type="FunFam" id="2.60.40.690:FF:000004">
    <property type="entry name" value="Complement C3"/>
    <property type="match status" value="1"/>
</dbReference>
<dbReference type="FunFam" id="6.20.50.160:FF:000003">
    <property type="entry name" value="Complement C3"/>
    <property type="match status" value="1"/>
</dbReference>
<dbReference type="FunFam" id="2.60.40.10:FF:000155">
    <property type="entry name" value="complement C3 isoform X1"/>
    <property type="match status" value="1"/>
</dbReference>
<dbReference type="FunFam" id="2.60.40.1940:FF:000001">
    <property type="entry name" value="Complement component C3"/>
    <property type="match status" value="1"/>
</dbReference>
<dbReference type="Gene3D" id="1.50.10.20">
    <property type="match status" value="1"/>
</dbReference>
<dbReference type="Gene3D" id="2.20.130.20">
    <property type="match status" value="1"/>
</dbReference>
<dbReference type="Gene3D" id="2.40.50.120">
    <property type="match status" value="1"/>
</dbReference>
<dbReference type="Gene3D" id="2.60.120.1540">
    <property type="match status" value="1"/>
</dbReference>
<dbReference type="Gene3D" id="2.60.40.1930">
    <property type="match status" value="3"/>
</dbReference>
<dbReference type="Gene3D" id="2.60.40.1940">
    <property type="match status" value="1"/>
</dbReference>
<dbReference type="Gene3D" id="6.20.50.160">
    <property type="match status" value="1"/>
</dbReference>
<dbReference type="Gene3D" id="2.60.40.690">
    <property type="entry name" value="Alpha-macroglobulin, receptor-binding domain"/>
    <property type="match status" value="1"/>
</dbReference>
<dbReference type="Gene3D" id="1.20.91.20">
    <property type="entry name" value="Anaphylotoxins (complement system)"/>
    <property type="match status" value="1"/>
</dbReference>
<dbReference type="Gene3D" id="2.60.40.10">
    <property type="entry name" value="Immunoglobulins"/>
    <property type="match status" value="2"/>
</dbReference>
<dbReference type="InterPro" id="IPR009048">
    <property type="entry name" value="A-macroglobulin_rcpt-bd"/>
</dbReference>
<dbReference type="InterPro" id="IPR036595">
    <property type="entry name" value="A-macroglobulin_rcpt-bd_sf"/>
</dbReference>
<dbReference type="InterPro" id="IPR050473">
    <property type="entry name" value="A2M/Complement_sys"/>
</dbReference>
<dbReference type="InterPro" id="IPR011625">
    <property type="entry name" value="A2M_N_BRD"/>
</dbReference>
<dbReference type="InterPro" id="IPR047565">
    <property type="entry name" value="Alpha-macroglob_thiol-ester_cl"/>
</dbReference>
<dbReference type="InterPro" id="IPR011626">
    <property type="entry name" value="Alpha-macroglobulin_TED"/>
</dbReference>
<dbReference type="InterPro" id="IPR000020">
    <property type="entry name" value="Anaphylatoxin/fibulin"/>
</dbReference>
<dbReference type="InterPro" id="IPR018081">
    <property type="entry name" value="Anaphylatoxin_comp_syst"/>
</dbReference>
<dbReference type="InterPro" id="IPR041425">
    <property type="entry name" value="C3/4/5_MG1"/>
</dbReference>
<dbReference type="InterPro" id="IPR048848">
    <property type="entry name" value="C3_CUB2"/>
</dbReference>
<dbReference type="InterPro" id="IPR013783">
    <property type="entry name" value="Ig-like_fold"/>
</dbReference>
<dbReference type="InterPro" id="IPR001599">
    <property type="entry name" value="Macroglobln_a2"/>
</dbReference>
<dbReference type="InterPro" id="IPR019742">
    <property type="entry name" value="MacrogloblnA2_CS"/>
</dbReference>
<dbReference type="InterPro" id="IPR002890">
    <property type="entry name" value="MG2"/>
</dbReference>
<dbReference type="InterPro" id="IPR041555">
    <property type="entry name" value="MG3"/>
</dbReference>
<dbReference type="InterPro" id="IPR040839">
    <property type="entry name" value="MG4"/>
</dbReference>
<dbReference type="InterPro" id="IPR001134">
    <property type="entry name" value="Netrin_domain"/>
</dbReference>
<dbReference type="InterPro" id="IPR018933">
    <property type="entry name" value="Netrin_module_non-TIMP"/>
</dbReference>
<dbReference type="InterPro" id="IPR035815">
    <property type="entry name" value="NTR_complement_C3"/>
</dbReference>
<dbReference type="InterPro" id="IPR008930">
    <property type="entry name" value="Terpenoid_cyclase/PrenylTrfase"/>
</dbReference>
<dbReference type="InterPro" id="IPR008993">
    <property type="entry name" value="TIMP-like_OB-fold"/>
</dbReference>
<dbReference type="PANTHER" id="PTHR11412:SF81">
    <property type="entry name" value="COMPLEMENT C3"/>
    <property type="match status" value="1"/>
</dbReference>
<dbReference type="PANTHER" id="PTHR11412">
    <property type="entry name" value="MACROGLOBULIN / COMPLEMENT"/>
    <property type="match status" value="1"/>
</dbReference>
<dbReference type="Pfam" id="PF00207">
    <property type="entry name" value="A2M"/>
    <property type="match status" value="1"/>
</dbReference>
<dbReference type="Pfam" id="PF07703">
    <property type="entry name" value="A2M_BRD"/>
    <property type="match status" value="1"/>
</dbReference>
<dbReference type="Pfam" id="PF07677">
    <property type="entry name" value="A2M_recep"/>
    <property type="match status" value="1"/>
</dbReference>
<dbReference type="Pfam" id="PF01821">
    <property type="entry name" value="ANATO"/>
    <property type="match status" value="1"/>
</dbReference>
<dbReference type="Pfam" id="PF21308">
    <property type="entry name" value="C3_CUB2"/>
    <property type="match status" value="1"/>
</dbReference>
<dbReference type="Pfam" id="PF17790">
    <property type="entry name" value="MG1"/>
    <property type="match status" value="1"/>
</dbReference>
<dbReference type="Pfam" id="PF01835">
    <property type="entry name" value="MG2"/>
    <property type="match status" value="1"/>
</dbReference>
<dbReference type="Pfam" id="PF17791">
    <property type="entry name" value="MG3"/>
    <property type="match status" value="1"/>
</dbReference>
<dbReference type="Pfam" id="PF17789">
    <property type="entry name" value="MG4"/>
    <property type="match status" value="1"/>
</dbReference>
<dbReference type="Pfam" id="PF01759">
    <property type="entry name" value="NTR"/>
    <property type="match status" value="1"/>
</dbReference>
<dbReference type="Pfam" id="PF07678">
    <property type="entry name" value="TED_complement"/>
    <property type="match status" value="1"/>
</dbReference>
<dbReference type="SMART" id="SM01360">
    <property type="entry name" value="A2M"/>
    <property type="match status" value="1"/>
</dbReference>
<dbReference type="SMART" id="SM01359">
    <property type="entry name" value="A2M_N_2"/>
    <property type="match status" value="1"/>
</dbReference>
<dbReference type="SMART" id="SM01361">
    <property type="entry name" value="A2M_recep"/>
    <property type="match status" value="1"/>
</dbReference>
<dbReference type="SMART" id="SM00104">
    <property type="entry name" value="ANATO"/>
    <property type="match status" value="1"/>
</dbReference>
<dbReference type="SMART" id="SM00643">
    <property type="entry name" value="C345C"/>
    <property type="match status" value="1"/>
</dbReference>
<dbReference type="SMART" id="SM01419">
    <property type="entry name" value="Thiol-ester_cl"/>
    <property type="match status" value="1"/>
</dbReference>
<dbReference type="SUPFAM" id="SSF49410">
    <property type="entry name" value="Alpha-macroglobulin receptor domain"/>
    <property type="match status" value="1"/>
</dbReference>
<dbReference type="SUPFAM" id="SSF47686">
    <property type="entry name" value="Anaphylotoxins (complement system)"/>
    <property type="match status" value="1"/>
</dbReference>
<dbReference type="SUPFAM" id="SSF48239">
    <property type="entry name" value="Terpenoid cyclases/Protein prenyltransferases"/>
    <property type="match status" value="1"/>
</dbReference>
<dbReference type="SUPFAM" id="SSF50242">
    <property type="entry name" value="TIMP-like"/>
    <property type="match status" value="1"/>
</dbReference>
<dbReference type="PROSITE" id="PS00477">
    <property type="entry name" value="ALPHA_2_MACROGLOBULIN"/>
    <property type="match status" value="1"/>
</dbReference>
<dbReference type="PROSITE" id="PS01177">
    <property type="entry name" value="ANAPHYLATOXIN_1"/>
    <property type="match status" value="1"/>
</dbReference>
<dbReference type="PROSITE" id="PS01178">
    <property type="entry name" value="ANAPHYLATOXIN_2"/>
    <property type="match status" value="1"/>
</dbReference>
<dbReference type="PROSITE" id="PS50189">
    <property type="entry name" value="NTR"/>
    <property type="match status" value="1"/>
</dbReference>
<evidence type="ECO:0000250" key="1">
    <source>
        <dbReference type="UniProtKB" id="P01024"/>
    </source>
</evidence>
<evidence type="ECO:0000255" key="2">
    <source>
        <dbReference type="PROSITE-ProRule" id="PRU00022"/>
    </source>
</evidence>
<evidence type="ECO:0000255" key="3">
    <source>
        <dbReference type="PROSITE-ProRule" id="PRU00295"/>
    </source>
</evidence>
<evidence type="ECO:0000269" key="4">
    <source>
    </source>
</evidence>
<evidence type="ECO:0000305" key="5"/>
<proteinExistence type="evidence at protein level"/>
<name>CO3_ONCMY</name>